<proteinExistence type="inferred from homology"/>
<organism>
    <name type="scientific">Nitrosomonas europaea (strain ATCC 19718 / CIP 103999 / KCTC 2705 / NBRC 14298)</name>
    <dbReference type="NCBI Taxonomy" id="228410"/>
    <lineage>
        <taxon>Bacteria</taxon>
        <taxon>Pseudomonadati</taxon>
        <taxon>Pseudomonadota</taxon>
        <taxon>Betaproteobacteria</taxon>
        <taxon>Nitrosomonadales</taxon>
        <taxon>Nitrosomonadaceae</taxon>
        <taxon>Nitrosomonas</taxon>
    </lineage>
</organism>
<comment type="function">
    <text evidence="1">Binds the lower part of the 30S subunit head. Binds mRNA in the 70S ribosome, positioning it for translation.</text>
</comment>
<comment type="subunit">
    <text evidence="1">Part of the 30S ribosomal subunit. Forms a tight complex with proteins S10 and S14.</text>
</comment>
<comment type="similarity">
    <text evidence="1">Belongs to the universal ribosomal protein uS3 family.</text>
</comment>
<sequence>MGQKINPTGFRLSVLKNWSSRWYTNTKKFSDFLNEDISVRQYLQKKLAHASVGSIIIERPSKNAKITIHTSRPGVVIGKKGEDIEILRRNVEKLMNVPVHINIEEIRKPEIDAQLIAASITQQLEKRIMFRRAMKRAIQNAMRLGAQGIKIMSSGRLNGIEIARTEWYREGRVPLHTLRAEVDYGTSEARTTYGIIGVKVWVFKGEQLGIKERQN</sequence>
<accession>Q820R1</accession>
<evidence type="ECO:0000255" key="1">
    <source>
        <dbReference type="HAMAP-Rule" id="MF_01309"/>
    </source>
</evidence>
<evidence type="ECO:0000305" key="2"/>
<dbReference type="EMBL" id="AL954747">
    <property type="protein sequence ID" value="CAD84318.1"/>
    <property type="molecule type" value="Genomic_DNA"/>
</dbReference>
<dbReference type="SMR" id="Q820R1"/>
<dbReference type="STRING" id="228410.NE0407"/>
<dbReference type="KEGG" id="neu:NE0407"/>
<dbReference type="eggNOG" id="COG0092">
    <property type="taxonomic scope" value="Bacteria"/>
</dbReference>
<dbReference type="HOGENOM" id="CLU_058591_0_2_4"/>
<dbReference type="OrthoDB" id="9806396at2"/>
<dbReference type="PhylomeDB" id="Q820R1"/>
<dbReference type="Proteomes" id="UP000001416">
    <property type="component" value="Chromosome"/>
</dbReference>
<dbReference type="GO" id="GO:0022627">
    <property type="term" value="C:cytosolic small ribosomal subunit"/>
    <property type="evidence" value="ECO:0007669"/>
    <property type="project" value="TreeGrafter"/>
</dbReference>
<dbReference type="GO" id="GO:0003729">
    <property type="term" value="F:mRNA binding"/>
    <property type="evidence" value="ECO:0007669"/>
    <property type="project" value="UniProtKB-UniRule"/>
</dbReference>
<dbReference type="GO" id="GO:0019843">
    <property type="term" value="F:rRNA binding"/>
    <property type="evidence" value="ECO:0007669"/>
    <property type="project" value="UniProtKB-UniRule"/>
</dbReference>
<dbReference type="GO" id="GO:0003735">
    <property type="term" value="F:structural constituent of ribosome"/>
    <property type="evidence" value="ECO:0007669"/>
    <property type="project" value="InterPro"/>
</dbReference>
<dbReference type="GO" id="GO:0006412">
    <property type="term" value="P:translation"/>
    <property type="evidence" value="ECO:0007669"/>
    <property type="project" value="UniProtKB-UniRule"/>
</dbReference>
<dbReference type="CDD" id="cd02412">
    <property type="entry name" value="KH-II_30S_S3"/>
    <property type="match status" value="1"/>
</dbReference>
<dbReference type="FunFam" id="3.30.1140.32:FF:000002">
    <property type="entry name" value="30S ribosomal protein S3"/>
    <property type="match status" value="1"/>
</dbReference>
<dbReference type="FunFam" id="3.30.300.20:FF:000001">
    <property type="entry name" value="30S ribosomal protein S3"/>
    <property type="match status" value="1"/>
</dbReference>
<dbReference type="Gene3D" id="3.30.300.20">
    <property type="match status" value="1"/>
</dbReference>
<dbReference type="Gene3D" id="3.30.1140.32">
    <property type="entry name" value="Ribosomal protein S3, C-terminal domain"/>
    <property type="match status" value="1"/>
</dbReference>
<dbReference type="HAMAP" id="MF_01309_B">
    <property type="entry name" value="Ribosomal_uS3_B"/>
    <property type="match status" value="1"/>
</dbReference>
<dbReference type="InterPro" id="IPR004087">
    <property type="entry name" value="KH_dom"/>
</dbReference>
<dbReference type="InterPro" id="IPR015946">
    <property type="entry name" value="KH_dom-like_a/b"/>
</dbReference>
<dbReference type="InterPro" id="IPR004044">
    <property type="entry name" value="KH_dom_type_2"/>
</dbReference>
<dbReference type="InterPro" id="IPR009019">
    <property type="entry name" value="KH_sf_prok-type"/>
</dbReference>
<dbReference type="InterPro" id="IPR036419">
    <property type="entry name" value="Ribosomal_S3_C_sf"/>
</dbReference>
<dbReference type="InterPro" id="IPR005704">
    <property type="entry name" value="Ribosomal_uS3_bac-typ"/>
</dbReference>
<dbReference type="InterPro" id="IPR001351">
    <property type="entry name" value="Ribosomal_uS3_C"/>
</dbReference>
<dbReference type="InterPro" id="IPR018280">
    <property type="entry name" value="Ribosomal_uS3_CS"/>
</dbReference>
<dbReference type="NCBIfam" id="TIGR01009">
    <property type="entry name" value="rpsC_bact"/>
    <property type="match status" value="1"/>
</dbReference>
<dbReference type="PANTHER" id="PTHR11760">
    <property type="entry name" value="30S/40S RIBOSOMAL PROTEIN S3"/>
    <property type="match status" value="1"/>
</dbReference>
<dbReference type="PANTHER" id="PTHR11760:SF19">
    <property type="entry name" value="SMALL RIBOSOMAL SUBUNIT PROTEIN US3C"/>
    <property type="match status" value="1"/>
</dbReference>
<dbReference type="Pfam" id="PF07650">
    <property type="entry name" value="KH_2"/>
    <property type="match status" value="1"/>
</dbReference>
<dbReference type="Pfam" id="PF00189">
    <property type="entry name" value="Ribosomal_S3_C"/>
    <property type="match status" value="1"/>
</dbReference>
<dbReference type="SMART" id="SM00322">
    <property type="entry name" value="KH"/>
    <property type="match status" value="1"/>
</dbReference>
<dbReference type="SUPFAM" id="SSF54814">
    <property type="entry name" value="Prokaryotic type KH domain (KH-domain type II)"/>
    <property type="match status" value="1"/>
</dbReference>
<dbReference type="SUPFAM" id="SSF54821">
    <property type="entry name" value="Ribosomal protein S3 C-terminal domain"/>
    <property type="match status" value="1"/>
</dbReference>
<dbReference type="PROSITE" id="PS50823">
    <property type="entry name" value="KH_TYPE_2"/>
    <property type="match status" value="1"/>
</dbReference>
<dbReference type="PROSITE" id="PS00548">
    <property type="entry name" value="RIBOSOMAL_S3"/>
    <property type="match status" value="1"/>
</dbReference>
<protein>
    <recommendedName>
        <fullName evidence="1">Small ribosomal subunit protein uS3</fullName>
    </recommendedName>
    <alternativeName>
        <fullName evidence="2">30S ribosomal protein S3</fullName>
    </alternativeName>
</protein>
<name>RS3_NITEU</name>
<reference key="1">
    <citation type="journal article" date="2003" name="J. Bacteriol.">
        <title>Complete genome sequence of the ammonia-oxidizing bacterium and obligate chemolithoautotroph Nitrosomonas europaea.</title>
        <authorList>
            <person name="Chain P."/>
            <person name="Lamerdin J.E."/>
            <person name="Larimer F.W."/>
            <person name="Regala W."/>
            <person name="Lao V."/>
            <person name="Land M.L."/>
            <person name="Hauser L."/>
            <person name="Hooper A.B."/>
            <person name="Klotz M.G."/>
            <person name="Norton J."/>
            <person name="Sayavedra-Soto L.A."/>
            <person name="Arciero D.M."/>
            <person name="Hommes N.G."/>
            <person name="Whittaker M.M."/>
            <person name="Arp D.J."/>
        </authorList>
    </citation>
    <scope>NUCLEOTIDE SEQUENCE [LARGE SCALE GENOMIC DNA]</scope>
    <source>
        <strain>ATCC 19718 / CIP 103999 / KCTC 2705 / NBRC 14298</strain>
    </source>
</reference>
<gene>
    <name evidence="1" type="primary">rpsC</name>
    <name type="ordered locus">NE0407</name>
</gene>
<keyword id="KW-1185">Reference proteome</keyword>
<keyword id="KW-0687">Ribonucleoprotein</keyword>
<keyword id="KW-0689">Ribosomal protein</keyword>
<keyword id="KW-0694">RNA-binding</keyword>
<keyword id="KW-0699">rRNA-binding</keyword>
<feature type="chain" id="PRO_0000130162" description="Small ribosomal subunit protein uS3">
    <location>
        <begin position="1"/>
        <end position="215"/>
    </location>
</feature>
<feature type="domain" description="KH type-2" evidence="1">
    <location>
        <begin position="39"/>
        <end position="107"/>
    </location>
</feature>